<dbReference type="EMBL" id="M11920">
    <property type="status" value="NOT_ANNOTATED_CDS"/>
    <property type="molecule type" value="Genomic_DNA"/>
</dbReference>
<dbReference type="EMBL" id="X02799">
    <property type="protein sequence ID" value="CAA26568.1"/>
    <property type="molecule type" value="Genomic_DNA"/>
</dbReference>
<dbReference type="PIR" id="B24521">
    <property type="entry name" value="IMBP2"/>
</dbReference>
<dbReference type="RefSeq" id="YP_009829904.1">
    <property type="nucleotide sequence ID" value="NC_048631.1"/>
</dbReference>
<dbReference type="SMR" id="P10426"/>
<dbReference type="GeneID" id="55599338"/>
<dbReference type="Gene3D" id="1.10.10.2910">
    <property type="match status" value="1"/>
</dbReference>
<dbReference type="InterPro" id="IPR010359">
    <property type="entry name" value="IrrE_HExxH"/>
</dbReference>
<dbReference type="InterPro" id="IPR052345">
    <property type="entry name" value="Rad_response_metalloprotease"/>
</dbReference>
<dbReference type="PANTHER" id="PTHR43236">
    <property type="entry name" value="ANTITOXIN HIGA1"/>
    <property type="match status" value="1"/>
</dbReference>
<dbReference type="PANTHER" id="PTHR43236:SF1">
    <property type="entry name" value="BLL7220 PROTEIN"/>
    <property type="match status" value="1"/>
</dbReference>
<dbReference type="Pfam" id="PF06114">
    <property type="entry name" value="Peptidase_M78"/>
    <property type="match status" value="1"/>
</dbReference>
<name>YIM2_BPPH1</name>
<sequence>MTIKNRGPYTLIKAAVQRLIKKYKTSNPYELASYININVIPWNLHHEIMGFYKYDKRNKYIVINSNLNQAERTFVCSHELGHAQLHPRANTPFMKERTLFSVDKYEVEANTFAVELLLPDWVVSQYKNTEFTLDDIAVMNGVPAELAHLKDLSELKNF</sequence>
<organismHost>
    <name type="scientific">Bacillus subtilis</name>
    <dbReference type="NCBI Taxonomy" id="1423"/>
</organismHost>
<feature type="chain" id="PRO_0000077721" description="Uncharacterized immunity region protein 2">
    <location>
        <begin position="1"/>
        <end position="158"/>
    </location>
</feature>
<proteinExistence type="predicted"/>
<reference key="1">
    <citation type="journal article" date="1985" name="Gene">
        <title>Nucleotide sequence of the immunity region of Bacillus subtilis bacteriophage phi 105: identification of the repressor gene and its mRNA and protein products.</title>
        <authorList>
            <person name="Cully D.F."/>
            <person name="Garro A.J."/>
        </authorList>
    </citation>
    <scope>NUCLEOTIDE SEQUENCE [GENOMIC DNA]</scope>
</reference>
<reference key="2">
    <citation type="journal article" date="1985" name="Nucleic Acids Res.">
        <title>Nucleotide sequence and mutational analysis of an immunity repressor gene from Bacillus subtilis temperate phage phi 105.</title>
        <authorList>
            <person name="Dhaese P."/>
            <person name="Seurinck J."/>
            <person name="de Smet B."/>
            <person name="van Montagu M."/>
        </authorList>
    </citation>
    <scope>NUCLEOTIDE SEQUENCE [GENOMIC DNA]</scope>
</reference>
<protein>
    <recommendedName>
        <fullName>Uncharacterized immunity region protein 2</fullName>
    </recommendedName>
</protein>
<accession>P10426</accession>
<organism>
    <name type="scientific">Bacillus phage phi105</name>
    <name type="common">Bacteriophage phi-105</name>
    <dbReference type="NCBI Taxonomy" id="10717"/>
    <lineage>
        <taxon>Viruses</taxon>
        <taxon>Duplodnaviria</taxon>
        <taxon>Heunggongvirae</taxon>
        <taxon>Uroviricota</taxon>
        <taxon>Caudoviricetes</taxon>
        <taxon>Spizizenvirus</taxon>
        <taxon>Spizizenvirus sv105</taxon>
    </lineage>
</organism>